<keyword id="KW-0963">Cytoplasm</keyword>
<keyword id="KW-0396">Initiation factor</keyword>
<keyword id="KW-0648">Protein biosynthesis</keyword>
<keyword id="KW-1185">Reference proteome</keyword>
<sequence length="249" mass="27786">MGVAFDKCDTRPAHIDAILNGLDRYNPETTTVFQDYVAQQCEDRTFDCYANLALLKLYQFNPHLLQAETATNILAKALTVFPSPAFSLCLALLPAHTQPFPTADADASQTSDFVESVQKLARLSTLLESAQYAQFWSTLNSDDLYADLVADVAGFEELVRIRIAVEVGKAFREINAEVLEQWFDLRSREALEKFVTEVCGWEVDKAGPNGTVVKVPSNKENEVRSEVKSEHVGVEMFGRVIRRGFEQAA</sequence>
<accession>A1CK40</accession>
<gene>
    <name type="ORF">ACLA_037210</name>
</gene>
<reference key="1">
    <citation type="journal article" date="2008" name="PLoS Genet.">
        <title>Genomic islands in the pathogenic filamentous fungus Aspergillus fumigatus.</title>
        <authorList>
            <person name="Fedorova N.D."/>
            <person name="Khaldi N."/>
            <person name="Joardar V.S."/>
            <person name="Maiti R."/>
            <person name="Amedeo P."/>
            <person name="Anderson M.J."/>
            <person name="Crabtree J."/>
            <person name="Silva J.C."/>
            <person name="Badger J.H."/>
            <person name="Albarraq A."/>
            <person name="Angiuoli S."/>
            <person name="Bussey H."/>
            <person name="Bowyer P."/>
            <person name="Cotty P.J."/>
            <person name="Dyer P.S."/>
            <person name="Egan A."/>
            <person name="Galens K."/>
            <person name="Fraser-Liggett C.M."/>
            <person name="Haas B.J."/>
            <person name="Inman J.M."/>
            <person name="Kent R."/>
            <person name="Lemieux S."/>
            <person name="Malavazi I."/>
            <person name="Orvis J."/>
            <person name="Roemer T."/>
            <person name="Ronning C.M."/>
            <person name="Sundaram J.P."/>
            <person name="Sutton G."/>
            <person name="Turner G."/>
            <person name="Venter J.C."/>
            <person name="White O.R."/>
            <person name="Whitty B.R."/>
            <person name="Youngman P."/>
            <person name="Wolfe K.H."/>
            <person name="Goldman G.H."/>
            <person name="Wortman J.R."/>
            <person name="Jiang B."/>
            <person name="Denning D.W."/>
            <person name="Nierman W.C."/>
        </authorList>
    </citation>
    <scope>NUCLEOTIDE SEQUENCE [LARGE SCALE GENOMIC DNA]</scope>
    <source>
        <strain>ATCC 1007 / CBS 513.65 / DSM 816 / NCTC 3887 / NRRL 1 / QM 1276 / 107</strain>
    </source>
</reference>
<organism>
    <name type="scientific">Aspergillus clavatus (strain ATCC 1007 / CBS 513.65 / DSM 816 / NCTC 3887 / NRRL 1 / QM 1276 / 107)</name>
    <dbReference type="NCBI Taxonomy" id="344612"/>
    <lineage>
        <taxon>Eukaryota</taxon>
        <taxon>Fungi</taxon>
        <taxon>Dikarya</taxon>
        <taxon>Ascomycota</taxon>
        <taxon>Pezizomycotina</taxon>
        <taxon>Eurotiomycetes</taxon>
        <taxon>Eurotiomycetidae</taxon>
        <taxon>Eurotiales</taxon>
        <taxon>Aspergillaceae</taxon>
        <taxon>Aspergillus</taxon>
        <taxon>Aspergillus subgen. Fumigati</taxon>
    </lineage>
</organism>
<protein>
    <recommendedName>
        <fullName evidence="1">Eukaryotic translation initiation factor 3 subunit K</fullName>
        <shortName evidence="1">eIF3k</shortName>
    </recommendedName>
    <alternativeName>
        <fullName evidence="1">eIF-3 p25</fullName>
    </alternativeName>
</protein>
<name>EIF3K_ASPCL</name>
<proteinExistence type="inferred from homology"/>
<feature type="chain" id="PRO_0000365051" description="Eukaryotic translation initiation factor 3 subunit K">
    <location>
        <begin position="1"/>
        <end position="249"/>
    </location>
</feature>
<feature type="domain" description="PCI" evidence="2">
    <location>
        <begin position="46"/>
        <end position="222"/>
    </location>
</feature>
<dbReference type="EMBL" id="DS027056">
    <property type="protein sequence ID" value="EAW09514.1"/>
    <property type="molecule type" value="Genomic_DNA"/>
</dbReference>
<dbReference type="RefSeq" id="XP_001270940.1">
    <property type="nucleotide sequence ID" value="XM_001270939.1"/>
</dbReference>
<dbReference type="SMR" id="A1CK40"/>
<dbReference type="STRING" id="344612.A1CK40"/>
<dbReference type="EnsemblFungi" id="EAW09514">
    <property type="protein sequence ID" value="EAW09514"/>
    <property type="gene ID" value="ACLA_037210"/>
</dbReference>
<dbReference type="GeneID" id="4703269"/>
<dbReference type="KEGG" id="act:ACLA_037210"/>
<dbReference type="VEuPathDB" id="FungiDB:ACLA_037210"/>
<dbReference type="eggNOG" id="KOG3252">
    <property type="taxonomic scope" value="Eukaryota"/>
</dbReference>
<dbReference type="HOGENOM" id="CLU_076723_0_1_1"/>
<dbReference type="OMA" id="GDDLCAD"/>
<dbReference type="OrthoDB" id="337745at2759"/>
<dbReference type="Proteomes" id="UP000006701">
    <property type="component" value="Unassembled WGS sequence"/>
</dbReference>
<dbReference type="GO" id="GO:0016282">
    <property type="term" value="C:eukaryotic 43S preinitiation complex"/>
    <property type="evidence" value="ECO:0007669"/>
    <property type="project" value="UniProtKB-UniRule"/>
</dbReference>
<dbReference type="GO" id="GO:0033290">
    <property type="term" value="C:eukaryotic 48S preinitiation complex"/>
    <property type="evidence" value="ECO:0007669"/>
    <property type="project" value="UniProtKB-UniRule"/>
</dbReference>
<dbReference type="GO" id="GO:0005852">
    <property type="term" value="C:eukaryotic translation initiation factor 3 complex"/>
    <property type="evidence" value="ECO:0007669"/>
    <property type="project" value="UniProtKB-UniRule"/>
</dbReference>
<dbReference type="GO" id="GO:0043022">
    <property type="term" value="F:ribosome binding"/>
    <property type="evidence" value="ECO:0007669"/>
    <property type="project" value="InterPro"/>
</dbReference>
<dbReference type="GO" id="GO:0003723">
    <property type="term" value="F:RNA binding"/>
    <property type="evidence" value="ECO:0007669"/>
    <property type="project" value="UniProtKB-UniRule"/>
</dbReference>
<dbReference type="GO" id="GO:0003743">
    <property type="term" value="F:translation initiation factor activity"/>
    <property type="evidence" value="ECO:0007669"/>
    <property type="project" value="UniProtKB-UniRule"/>
</dbReference>
<dbReference type="GO" id="GO:0001732">
    <property type="term" value="P:formation of cytoplasmic translation initiation complex"/>
    <property type="evidence" value="ECO:0007669"/>
    <property type="project" value="UniProtKB-UniRule"/>
</dbReference>
<dbReference type="GO" id="GO:0006446">
    <property type="term" value="P:regulation of translational initiation"/>
    <property type="evidence" value="ECO:0007669"/>
    <property type="project" value="InterPro"/>
</dbReference>
<dbReference type="FunFam" id="1.10.10.10:FF:000389">
    <property type="entry name" value="Eukaryotic translation initiation factor 3 subunit K"/>
    <property type="match status" value="1"/>
</dbReference>
<dbReference type="FunFam" id="1.25.40.250:FF:000003">
    <property type="entry name" value="Eukaryotic translation initiation factor 3 subunit K"/>
    <property type="match status" value="1"/>
</dbReference>
<dbReference type="Gene3D" id="1.25.40.250">
    <property type="entry name" value="ARM repeat, domain 1"/>
    <property type="match status" value="1"/>
</dbReference>
<dbReference type="Gene3D" id="1.10.10.10">
    <property type="entry name" value="Winged helix-like DNA-binding domain superfamily/Winged helix DNA-binding domain"/>
    <property type="match status" value="1"/>
</dbReference>
<dbReference type="HAMAP" id="MF_03010">
    <property type="entry name" value="eIF3k"/>
    <property type="match status" value="1"/>
</dbReference>
<dbReference type="InterPro" id="IPR016024">
    <property type="entry name" value="ARM-type_fold"/>
</dbReference>
<dbReference type="InterPro" id="IPR033464">
    <property type="entry name" value="CSN8_PSD8_EIF3K"/>
</dbReference>
<dbReference type="InterPro" id="IPR009374">
    <property type="entry name" value="eIF3k"/>
</dbReference>
<dbReference type="InterPro" id="IPR000717">
    <property type="entry name" value="PCI_dom"/>
</dbReference>
<dbReference type="InterPro" id="IPR016020">
    <property type="entry name" value="Transl_init_fac_sub12_N_euk"/>
</dbReference>
<dbReference type="InterPro" id="IPR036388">
    <property type="entry name" value="WH-like_DNA-bd_sf"/>
</dbReference>
<dbReference type="InterPro" id="IPR036390">
    <property type="entry name" value="WH_DNA-bd_sf"/>
</dbReference>
<dbReference type="PANTHER" id="PTHR13022">
    <property type="entry name" value="EUKARYOTIC TRANSLATION INITIATION FACTOR 3 SUBUNIT 11"/>
    <property type="match status" value="1"/>
</dbReference>
<dbReference type="PANTHER" id="PTHR13022:SF0">
    <property type="entry name" value="EUKARYOTIC TRANSLATION INITIATION FACTOR 3 SUBUNIT K"/>
    <property type="match status" value="1"/>
</dbReference>
<dbReference type="Pfam" id="PF10075">
    <property type="entry name" value="CSN8_PSD8_EIF3K"/>
    <property type="match status" value="1"/>
</dbReference>
<dbReference type="SUPFAM" id="SSF48371">
    <property type="entry name" value="ARM repeat"/>
    <property type="match status" value="1"/>
</dbReference>
<dbReference type="SUPFAM" id="SSF46785">
    <property type="entry name" value="Winged helix' DNA-binding domain"/>
    <property type="match status" value="1"/>
</dbReference>
<dbReference type="PROSITE" id="PS50250">
    <property type="entry name" value="PCI"/>
    <property type="match status" value="1"/>
</dbReference>
<evidence type="ECO:0000255" key="1">
    <source>
        <dbReference type="HAMAP-Rule" id="MF_03010"/>
    </source>
</evidence>
<evidence type="ECO:0000255" key="2">
    <source>
        <dbReference type="PROSITE-ProRule" id="PRU01185"/>
    </source>
</evidence>
<comment type="function">
    <text evidence="1">Component of the eukaryotic translation initiation factor 3 (eIF-3) complex, which is involved in protein synthesis of a specialized repertoire of mRNAs and, together with other initiation factors, stimulates binding of mRNA and methionyl-tRNAi to the 40S ribosome. The eIF-3 complex specifically targets and initiates translation of a subset of mRNAs involved in cell proliferation.</text>
</comment>
<comment type="subunit">
    <text evidence="1">Component of the eukaryotic translation initiation factor 3 (eIF-3) complex.</text>
</comment>
<comment type="subcellular location">
    <subcellularLocation>
        <location evidence="1">Cytoplasm</location>
    </subcellularLocation>
</comment>
<comment type="similarity">
    <text evidence="1">Belongs to the eIF-3 subunit K family.</text>
</comment>